<keyword id="KW-0274">FAD</keyword>
<keyword id="KW-0276">Fatty acid metabolism</keyword>
<keyword id="KW-0285">Flavoprotein</keyword>
<keyword id="KW-0443">Lipid metabolism</keyword>
<keyword id="KW-0560">Oxidoreductase</keyword>
<keyword id="KW-0576">Peroxisome</keyword>
<keyword id="KW-1185">Reference proteome</keyword>
<reference key="1">
    <citation type="journal article" date="1990" name="Gene">
        <title>Structure and transcriptional control of the Saccharomyces cerevisiae POX1 gene encoding acyl-coenzyme A oxidase.</title>
        <authorList>
            <person name="Dmochowska A."/>
            <person name="Dignard D."/>
            <person name="Maleszka R."/>
            <person name="Thomas D.Y."/>
        </authorList>
    </citation>
    <scope>NUCLEOTIDE SEQUENCE [GENOMIC DNA]</scope>
</reference>
<reference key="2">
    <citation type="journal article" date="1997" name="Nature">
        <title>The nucleotide sequence of Saccharomyces cerevisiae chromosome VII.</title>
        <authorList>
            <person name="Tettelin H."/>
            <person name="Agostoni-Carbone M.L."/>
            <person name="Albermann K."/>
            <person name="Albers M."/>
            <person name="Arroyo J."/>
            <person name="Backes U."/>
            <person name="Barreiros T."/>
            <person name="Bertani I."/>
            <person name="Bjourson A.J."/>
            <person name="Brueckner M."/>
            <person name="Bruschi C.V."/>
            <person name="Carignani G."/>
            <person name="Castagnoli L."/>
            <person name="Cerdan E."/>
            <person name="Clemente M.L."/>
            <person name="Coblenz A."/>
            <person name="Coglievina M."/>
            <person name="Coissac E."/>
            <person name="Defoor E."/>
            <person name="Del Bino S."/>
            <person name="Delius H."/>
            <person name="Delneri D."/>
            <person name="de Wergifosse P."/>
            <person name="Dujon B."/>
            <person name="Durand P."/>
            <person name="Entian K.-D."/>
            <person name="Eraso P."/>
            <person name="Escribano V."/>
            <person name="Fabiani L."/>
            <person name="Fartmann B."/>
            <person name="Feroli F."/>
            <person name="Feuermann M."/>
            <person name="Frontali L."/>
            <person name="Garcia-Gonzalez M."/>
            <person name="Garcia-Saez M.I."/>
            <person name="Goffeau A."/>
            <person name="Guerreiro P."/>
            <person name="Hani J."/>
            <person name="Hansen M."/>
            <person name="Hebling U."/>
            <person name="Hernandez K."/>
            <person name="Heumann K."/>
            <person name="Hilger F."/>
            <person name="Hofmann B."/>
            <person name="Indge K.J."/>
            <person name="James C.M."/>
            <person name="Klima R."/>
            <person name="Koetter P."/>
            <person name="Kramer B."/>
            <person name="Kramer W."/>
            <person name="Lauquin G."/>
            <person name="Leuther H."/>
            <person name="Louis E.J."/>
            <person name="Maillier E."/>
            <person name="Marconi A."/>
            <person name="Martegani E."/>
            <person name="Mazon M.J."/>
            <person name="Mazzoni C."/>
            <person name="McReynolds A.D.K."/>
            <person name="Melchioretto P."/>
            <person name="Mewes H.-W."/>
            <person name="Minenkova O."/>
            <person name="Mueller-Auer S."/>
            <person name="Nawrocki A."/>
            <person name="Netter P."/>
            <person name="Neu R."/>
            <person name="Nombela C."/>
            <person name="Oliver S.G."/>
            <person name="Panzeri L."/>
            <person name="Paoluzi S."/>
            <person name="Plevani P."/>
            <person name="Portetelle D."/>
            <person name="Portillo F."/>
            <person name="Potier S."/>
            <person name="Purnelle B."/>
            <person name="Rieger M."/>
            <person name="Riles L."/>
            <person name="Rinaldi T."/>
            <person name="Robben J."/>
            <person name="Rodrigues-Pousada C."/>
            <person name="Rodriguez-Belmonte E."/>
            <person name="Rodriguez-Torres A.M."/>
            <person name="Rose M."/>
            <person name="Ruzzi M."/>
            <person name="Saliola M."/>
            <person name="Sanchez-Perez M."/>
            <person name="Schaefer B."/>
            <person name="Schaefer M."/>
            <person name="Scharfe M."/>
            <person name="Schmidheini T."/>
            <person name="Schreer A."/>
            <person name="Skala J."/>
            <person name="Souciet J.-L."/>
            <person name="Steensma H.Y."/>
            <person name="Talla E."/>
            <person name="Thierry A."/>
            <person name="Vandenbol M."/>
            <person name="van der Aart Q.J.M."/>
            <person name="Van Dyck L."/>
            <person name="Vanoni M."/>
            <person name="Verhasselt P."/>
            <person name="Voet M."/>
            <person name="Volckaert G."/>
            <person name="Wambutt R."/>
            <person name="Watson M.D."/>
            <person name="Weber N."/>
            <person name="Wedler E."/>
            <person name="Wedler H."/>
            <person name="Wipfli P."/>
            <person name="Wolf K."/>
            <person name="Wright L.F."/>
            <person name="Zaccaria P."/>
            <person name="Zimmermann M."/>
            <person name="Zollner A."/>
            <person name="Kleine K."/>
        </authorList>
    </citation>
    <scope>NUCLEOTIDE SEQUENCE [LARGE SCALE GENOMIC DNA]</scope>
    <source>
        <strain>ATCC 204508 / S288c</strain>
    </source>
</reference>
<reference key="3">
    <citation type="journal article" date="2014" name="G3 (Bethesda)">
        <title>The reference genome sequence of Saccharomyces cerevisiae: Then and now.</title>
        <authorList>
            <person name="Engel S.R."/>
            <person name="Dietrich F.S."/>
            <person name="Fisk D.G."/>
            <person name="Binkley G."/>
            <person name="Balakrishnan R."/>
            <person name="Costanzo M.C."/>
            <person name="Dwight S.S."/>
            <person name="Hitz B.C."/>
            <person name="Karra K."/>
            <person name="Nash R.S."/>
            <person name="Weng S."/>
            <person name="Wong E.D."/>
            <person name="Lloyd P."/>
            <person name="Skrzypek M.S."/>
            <person name="Miyasato S.R."/>
            <person name="Simison M."/>
            <person name="Cherry J.M."/>
        </authorList>
    </citation>
    <scope>GENOME REANNOTATION</scope>
    <source>
        <strain>ATCC 204508 / S288c</strain>
    </source>
</reference>
<reference key="4">
    <citation type="journal article" date="1997" name="Yeast">
        <title>Analysis of 21.7 kb DNA sequence from the left arm of chromosome VII reveals 11 open reading frames: two correspond to new genes.</title>
        <authorList>
            <person name="Feuermann M."/>
            <person name="Simeonava L."/>
            <person name="Souciet J.-L."/>
            <person name="Potier S."/>
        </authorList>
    </citation>
    <scope>NUCLEOTIDE SEQUENCE [GENOMIC DNA] OF 1-327</scope>
</reference>
<name>ACOX_YEAST</name>
<comment type="catalytic activity">
    <reaction>
        <text>a 2,3-saturated acyl-CoA + O2 = a (2E)-enoyl-CoA + H2O2</text>
        <dbReference type="Rhea" id="RHEA:38959"/>
        <dbReference type="ChEBI" id="CHEBI:15379"/>
        <dbReference type="ChEBI" id="CHEBI:16240"/>
        <dbReference type="ChEBI" id="CHEBI:58856"/>
        <dbReference type="ChEBI" id="CHEBI:65111"/>
        <dbReference type="EC" id="1.3.3.6"/>
    </reaction>
</comment>
<comment type="cofactor">
    <cofactor>
        <name>FAD</name>
        <dbReference type="ChEBI" id="CHEBI:57692"/>
    </cofactor>
</comment>
<comment type="pathway">
    <text>Lipid metabolism; peroxisomal fatty acid beta-oxidation.</text>
</comment>
<comment type="subunit">
    <text>Homooctamer.</text>
</comment>
<comment type="interaction">
    <interactant intactId="EBI-3999">
        <id>P13711</id>
    </interactant>
    <interactant intactId="EBI-15447">
        <id>P05317</id>
        <label>RPP0</label>
    </interactant>
    <organismsDiffer>false</organismsDiffer>
    <experiments>2</experiments>
</comment>
<comment type="subcellular location">
    <subcellularLocation>
        <location>Peroxisome</location>
    </subcellularLocation>
</comment>
<comment type="similarity">
    <text evidence="1">Belongs to the acyl-CoA oxidase family.</text>
</comment>
<organism>
    <name type="scientific">Saccharomyces cerevisiae (strain ATCC 204508 / S288c)</name>
    <name type="common">Baker's yeast</name>
    <dbReference type="NCBI Taxonomy" id="559292"/>
    <lineage>
        <taxon>Eukaryota</taxon>
        <taxon>Fungi</taxon>
        <taxon>Dikarya</taxon>
        <taxon>Ascomycota</taxon>
        <taxon>Saccharomycotina</taxon>
        <taxon>Saccharomycetes</taxon>
        <taxon>Saccharomycetales</taxon>
        <taxon>Saccharomycetaceae</taxon>
        <taxon>Saccharomyces</taxon>
    </lineage>
</organism>
<feature type="chain" id="PRO_0000204704" description="Acyl-coenzyme A oxidase">
    <location>
        <begin position="1"/>
        <end position="748"/>
    </location>
</feature>
<feature type="sequence conflict" description="In Ref. 1; AAA34891." evidence="1" ref="1">
    <original>S</original>
    <variation>T</variation>
    <location>
        <position position="443"/>
    </location>
</feature>
<sequence length="748" mass="84042">MTRRTTINPDSVVLNPQKFIQKERADSKIKVDQVNTFLESSPERRTLTHALIDQIVNDPILKTDTDYYDAKKMQEREITAKKIARLASYMEHDIKTVRKHFRDTDLMKELQANDPDKASPLTNKDLFIFDKRLSLVANIDPQLGTRVGVHLGLFGNCIKGNGTDEQIRYWLQERGATLMKGIYGCFAMTELGHGSNVAQLQTRAVYDKQNDTFVIDTPDLTATKWWIGGAAHSATHAAVYARLIVEGKDYGVKTFVVPLRDPSTFQLLAGVSIGDIGAKMGRDGIDNGWIQFRNVVIPREFMLSRFTKVVRSPDGSVTVKTEPQLDQISGYSALLSGRVNMVMDSFRFGSKFATIAVRYAVGRQQFAPRKGLSETQLIDYPLHQYRVLPQLCVPYLVSPVAFKLMDNYYSTLDELYNASSSAYKAALVTVSKKLKNLFIDSASLKATNTWLIATLIDELRQTCGGHGYSQYNGFGKGYDDWVVQCTWEGDNNVLSLTSAKSILKKFIDSATKGRFDNTLDVDSFSYLKPQYIGSVVSGEIKSGLKELGDYTEIWSITLIKLLAHIGTLVEKSRSIDSVSKLLVLVSKFHALRCMLKTYYDKLNSRDSHISDEITKESMWNVYKLFSLYFIDKHSGEFQQFKIFTPDQISKVVQPQLLALLPIVRKDCIGLTDSFELPDAMLNSPIGYFDGDIYHNYFNEVCRNNPVEADGAGKPSYHALLSSMLGRGFEFDQKLGGAANAEILSKINK</sequence>
<accession>P13711</accession>
<accession>D6VTV0</accession>
<protein>
    <recommendedName>
        <fullName>Acyl-coenzyme A oxidase</fullName>
        <shortName>Acyl-CoA oxidase</shortName>
        <ecNumber>1.3.3.6</ecNumber>
    </recommendedName>
</protein>
<dbReference type="EC" id="1.3.3.6"/>
<dbReference type="EMBL" id="M27515">
    <property type="protein sequence ID" value="AAA34891.1"/>
    <property type="molecule type" value="Genomic_DNA"/>
</dbReference>
<dbReference type="EMBL" id="Z72727">
    <property type="protein sequence ID" value="CAA96918.1"/>
    <property type="molecule type" value="Genomic_DNA"/>
</dbReference>
<dbReference type="EMBL" id="Z72726">
    <property type="protein sequence ID" value="CAA96917.1"/>
    <property type="molecule type" value="Genomic_DNA"/>
</dbReference>
<dbReference type="EMBL" id="BK006941">
    <property type="protein sequence ID" value="DAA07911.1"/>
    <property type="molecule type" value="Genomic_DNA"/>
</dbReference>
<dbReference type="PIR" id="S64224">
    <property type="entry name" value="S64224"/>
</dbReference>
<dbReference type="RefSeq" id="NP_011310.1">
    <property type="nucleotide sequence ID" value="NM_001181070.1"/>
</dbReference>
<dbReference type="SMR" id="P13711"/>
<dbReference type="BioGRID" id="33051">
    <property type="interactions" value="182"/>
</dbReference>
<dbReference type="DIP" id="DIP-6592N"/>
<dbReference type="FunCoup" id="P13711">
    <property type="interactions" value="545"/>
</dbReference>
<dbReference type="IntAct" id="P13711">
    <property type="interactions" value="127"/>
</dbReference>
<dbReference type="MINT" id="P13711"/>
<dbReference type="STRING" id="4932.YGL205W"/>
<dbReference type="GlyGen" id="P13711">
    <property type="glycosylation" value="3 sites, 1 O-linked glycan (3 sites)"/>
</dbReference>
<dbReference type="iPTMnet" id="P13711"/>
<dbReference type="PaxDb" id="4932-YGL205W"/>
<dbReference type="PeptideAtlas" id="P13711"/>
<dbReference type="EnsemblFungi" id="YGL205W_mRNA">
    <property type="protein sequence ID" value="YGL205W"/>
    <property type="gene ID" value="YGL205W"/>
</dbReference>
<dbReference type="GeneID" id="852667"/>
<dbReference type="KEGG" id="sce:YGL205W"/>
<dbReference type="AGR" id="SGD:S000003173"/>
<dbReference type="SGD" id="S000003173">
    <property type="gene designation" value="POX1"/>
</dbReference>
<dbReference type="VEuPathDB" id="FungiDB:YGL205W"/>
<dbReference type="eggNOG" id="KOG0136">
    <property type="taxonomic scope" value="Eukaryota"/>
</dbReference>
<dbReference type="GeneTree" id="ENSGT00940000161693"/>
<dbReference type="HOGENOM" id="CLU_014629_3_1_1"/>
<dbReference type="InParanoid" id="P13711"/>
<dbReference type="OMA" id="SINKRFA"/>
<dbReference type="OrthoDB" id="538336at2759"/>
<dbReference type="BioCyc" id="MetaCyc:YGL205W-MONOMER"/>
<dbReference type="BioCyc" id="YEAST:YGL205W-MONOMER"/>
<dbReference type="Reactome" id="R-SCE-389887">
    <property type="pathway name" value="Beta-oxidation of pristanoyl-CoA"/>
</dbReference>
<dbReference type="Reactome" id="R-SCE-9033241">
    <property type="pathway name" value="Peroxisomal protein import"/>
</dbReference>
<dbReference type="UniPathway" id="UPA00661"/>
<dbReference type="BioGRID-ORCS" id="852667">
    <property type="hits" value="5 hits in 10 CRISPR screens"/>
</dbReference>
<dbReference type="PRO" id="PR:P13711"/>
<dbReference type="Proteomes" id="UP000002311">
    <property type="component" value="Chromosome VII"/>
</dbReference>
<dbReference type="RNAct" id="P13711">
    <property type="molecule type" value="protein"/>
</dbReference>
<dbReference type="GO" id="GO:0005782">
    <property type="term" value="C:peroxisomal matrix"/>
    <property type="evidence" value="ECO:0000314"/>
    <property type="project" value="SGD"/>
</dbReference>
<dbReference type="GO" id="GO:0005777">
    <property type="term" value="C:peroxisome"/>
    <property type="evidence" value="ECO:0000318"/>
    <property type="project" value="GO_Central"/>
</dbReference>
<dbReference type="GO" id="GO:0003997">
    <property type="term" value="F:acyl-CoA oxidase activity"/>
    <property type="evidence" value="ECO:0000247"/>
    <property type="project" value="SGD"/>
</dbReference>
<dbReference type="GO" id="GO:0071949">
    <property type="term" value="F:FAD binding"/>
    <property type="evidence" value="ECO:0007669"/>
    <property type="project" value="InterPro"/>
</dbReference>
<dbReference type="GO" id="GO:0005504">
    <property type="term" value="F:fatty acid binding"/>
    <property type="evidence" value="ECO:0000318"/>
    <property type="project" value="GO_Central"/>
</dbReference>
<dbReference type="GO" id="GO:0050660">
    <property type="term" value="F:flavin adenine dinucleotide binding"/>
    <property type="evidence" value="ECO:0000318"/>
    <property type="project" value="GO_Central"/>
</dbReference>
<dbReference type="GO" id="GO:0006635">
    <property type="term" value="P:fatty acid beta-oxidation"/>
    <property type="evidence" value="ECO:0000315"/>
    <property type="project" value="SGD"/>
</dbReference>
<dbReference type="GO" id="GO:0033540">
    <property type="term" value="P:fatty acid beta-oxidation using acyl-CoA oxidase"/>
    <property type="evidence" value="ECO:0000318"/>
    <property type="project" value="GO_Central"/>
</dbReference>
<dbReference type="CDD" id="cd01150">
    <property type="entry name" value="AXO"/>
    <property type="match status" value="1"/>
</dbReference>
<dbReference type="FunFam" id="1.20.140.10:FF:000015">
    <property type="entry name" value="Acyl-coenzyme A oxidase"/>
    <property type="match status" value="1"/>
</dbReference>
<dbReference type="FunFam" id="1.20.140.10:FF:000041">
    <property type="entry name" value="Acyl-coenzyme A oxidase"/>
    <property type="match status" value="1"/>
</dbReference>
<dbReference type="FunFam" id="2.40.110.10:FF:000003">
    <property type="entry name" value="Acyl-coenzyme A oxidase"/>
    <property type="match status" value="1"/>
</dbReference>
<dbReference type="Gene3D" id="1.10.540.10">
    <property type="entry name" value="Acyl-CoA dehydrogenase/oxidase, N-terminal domain"/>
    <property type="match status" value="1"/>
</dbReference>
<dbReference type="Gene3D" id="2.40.110.10">
    <property type="entry name" value="Butyryl-CoA Dehydrogenase, subunit A, domain 2"/>
    <property type="match status" value="1"/>
</dbReference>
<dbReference type="Gene3D" id="1.20.140.10">
    <property type="entry name" value="Butyryl-CoA Dehydrogenase, subunit A, domain 3"/>
    <property type="match status" value="2"/>
</dbReference>
<dbReference type="InterPro" id="IPR034171">
    <property type="entry name" value="ACO"/>
</dbReference>
<dbReference type="InterPro" id="IPR055060">
    <property type="entry name" value="ACOX_C_alpha1"/>
</dbReference>
<dbReference type="InterPro" id="IPR029320">
    <property type="entry name" value="Acyl-CoA_ox_N"/>
</dbReference>
<dbReference type="InterPro" id="IPR006091">
    <property type="entry name" value="Acyl-CoA_Oxase/DH_mid-dom"/>
</dbReference>
<dbReference type="InterPro" id="IPR046373">
    <property type="entry name" value="Acyl-CoA_Oxase/DH_mid-dom_sf"/>
</dbReference>
<dbReference type="InterPro" id="IPR012258">
    <property type="entry name" value="Acyl-CoA_oxidase"/>
</dbReference>
<dbReference type="InterPro" id="IPR002655">
    <property type="entry name" value="Acyl-CoA_oxidase_C"/>
</dbReference>
<dbReference type="InterPro" id="IPR036250">
    <property type="entry name" value="AcylCo_DH-like_C"/>
</dbReference>
<dbReference type="InterPro" id="IPR037069">
    <property type="entry name" value="AcylCoA_DH/ox_N_sf"/>
</dbReference>
<dbReference type="InterPro" id="IPR009100">
    <property type="entry name" value="AcylCoA_DH/oxidase_NM_dom_sf"/>
</dbReference>
<dbReference type="PANTHER" id="PTHR10909:SF352">
    <property type="entry name" value="ACYL-COENZYME A OXIDASE-LIKE PROTEIN"/>
    <property type="match status" value="1"/>
</dbReference>
<dbReference type="PANTHER" id="PTHR10909">
    <property type="entry name" value="ELECTRON TRANSPORT OXIDOREDUCTASE"/>
    <property type="match status" value="1"/>
</dbReference>
<dbReference type="Pfam" id="PF01756">
    <property type="entry name" value="ACOX"/>
    <property type="match status" value="1"/>
</dbReference>
<dbReference type="Pfam" id="PF22924">
    <property type="entry name" value="ACOX_C_alpha1"/>
    <property type="match status" value="1"/>
</dbReference>
<dbReference type="Pfam" id="PF02770">
    <property type="entry name" value="Acyl-CoA_dh_M"/>
    <property type="match status" value="1"/>
</dbReference>
<dbReference type="Pfam" id="PF14749">
    <property type="entry name" value="Acyl-CoA_ox_N"/>
    <property type="match status" value="1"/>
</dbReference>
<dbReference type="PIRSF" id="PIRSF000168">
    <property type="entry name" value="Acyl-CoA_oxidase"/>
    <property type="match status" value="1"/>
</dbReference>
<dbReference type="SUPFAM" id="SSF47203">
    <property type="entry name" value="Acyl-CoA dehydrogenase C-terminal domain-like"/>
    <property type="match status" value="2"/>
</dbReference>
<dbReference type="SUPFAM" id="SSF56645">
    <property type="entry name" value="Acyl-CoA dehydrogenase NM domain-like"/>
    <property type="match status" value="1"/>
</dbReference>
<proteinExistence type="evidence at protein level"/>
<evidence type="ECO:0000305" key="1"/>
<gene>
    <name type="primary">POX1</name>
    <name type="synonym">FOX1</name>
    <name type="ordered locus">YGL205W</name>
</gene>